<sequence length="435" mass="47586">MTQLEAARKGKITEEMAYVAEKEGVSPEFVREGVAAGRIVIPRNPNHKTLTDFKGIGEGLSVKVNANLGTSYDYVDVEEEVEKARVAIQYGADTVMDLSTGGDLKAIRKRILEVATVPLGTVPIYEAEFRAARRKNFFDMSADELFQVIEEHGKEGVDYITVHVGVTLKNLEVYRNSPRTTGIVSRGGGLMAAWMLHRGEENPLYARFDDLLDIARTYDMTLSLGDGLRPGSLADSTDRAQIAELLTIGELVERARRAGVQAMVEGPGHIPLNEVAANVQIQKKLTGHAPFYILGMLPVDTAAGFDHIAGAIGGALAGWWGADMLCYLTPAEHLGLPTPEHVKQGVIAFKIAAHAADVARGNKRALERNRRMSEARYRLDWEGQFALALFPEEARRLKEERGSKTKACSMCGPFCPMNLVEAVLKGKGRMELPVA</sequence>
<comment type="function">
    <text evidence="1">Catalyzes the synthesis of the hydroxymethylpyrimidine phosphate (HMP-P) moiety of thiamine from aminoimidazole ribotide (AIR) in a radical S-adenosyl-L-methionine (SAM)-dependent reaction.</text>
</comment>
<comment type="catalytic activity">
    <reaction evidence="1">
        <text>5-amino-1-(5-phospho-beta-D-ribosyl)imidazole + S-adenosyl-L-methionine = 4-amino-2-methyl-5-(phosphooxymethyl)pyrimidine + CO + 5'-deoxyadenosine + formate + L-methionine + 3 H(+)</text>
        <dbReference type="Rhea" id="RHEA:24840"/>
        <dbReference type="ChEBI" id="CHEBI:15378"/>
        <dbReference type="ChEBI" id="CHEBI:15740"/>
        <dbReference type="ChEBI" id="CHEBI:17245"/>
        <dbReference type="ChEBI" id="CHEBI:17319"/>
        <dbReference type="ChEBI" id="CHEBI:57844"/>
        <dbReference type="ChEBI" id="CHEBI:58354"/>
        <dbReference type="ChEBI" id="CHEBI:59789"/>
        <dbReference type="ChEBI" id="CHEBI:137981"/>
        <dbReference type="EC" id="4.1.99.17"/>
    </reaction>
</comment>
<comment type="cofactor">
    <cofactor evidence="1">
        <name>[4Fe-4S] cluster</name>
        <dbReference type="ChEBI" id="CHEBI:49883"/>
    </cofactor>
    <text evidence="1">Binds 1 [4Fe-4S] cluster per subunit. The cluster is coordinated with 3 cysteines and an exchangeable S-adenosyl-L-methionine.</text>
</comment>
<comment type="pathway">
    <text evidence="1">Cofactor biosynthesis; thiamine diphosphate biosynthesis.</text>
</comment>
<comment type="similarity">
    <text evidence="1">Belongs to the ThiC family.</text>
</comment>
<dbReference type="EC" id="4.1.99.17" evidence="1"/>
<dbReference type="EMBL" id="AP008226">
    <property type="protein sequence ID" value="BAD70501.1"/>
    <property type="molecule type" value="Genomic_DNA"/>
</dbReference>
<dbReference type="RefSeq" id="WP_011228117.1">
    <property type="nucleotide sequence ID" value="NC_006461.1"/>
</dbReference>
<dbReference type="RefSeq" id="YP_143944.1">
    <property type="nucleotide sequence ID" value="NC_006461.1"/>
</dbReference>
<dbReference type="SMR" id="Q5SKG5"/>
<dbReference type="EnsemblBacteria" id="BAD70501">
    <property type="protein sequence ID" value="BAD70501"/>
    <property type="gene ID" value="BAD70501"/>
</dbReference>
<dbReference type="GeneID" id="3169091"/>
<dbReference type="KEGG" id="ttj:TTHA0678"/>
<dbReference type="PATRIC" id="fig|300852.9.peg.672"/>
<dbReference type="eggNOG" id="COG0422">
    <property type="taxonomic scope" value="Bacteria"/>
</dbReference>
<dbReference type="HOGENOM" id="CLU_013181_2_2_0"/>
<dbReference type="PhylomeDB" id="Q5SKG5"/>
<dbReference type="UniPathway" id="UPA00060"/>
<dbReference type="Proteomes" id="UP000000532">
    <property type="component" value="Chromosome"/>
</dbReference>
<dbReference type="GO" id="GO:0051539">
    <property type="term" value="F:4 iron, 4 sulfur cluster binding"/>
    <property type="evidence" value="ECO:0007669"/>
    <property type="project" value="UniProtKB-KW"/>
</dbReference>
<dbReference type="GO" id="GO:0016830">
    <property type="term" value="F:carbon-carbon lyase activity"/>
    <property type="evidence" value="ECO:0007669"/>
    <property type="project" value="InterPro"/>
</dbReference>
<dbReference type="GO" id="GO:0008270">
    <property type="term" value="F:zinc ion binding"/>
    <property type="evidence" value="ECO:0007669"/>
    <property type="project" value="UniProtKB-UniRule"/>
</dbReference>
<dbReference type="GO" id="GO:0009228">
    <property type="term" value="P:thiamine biosynthetic process"/>
    <property type="evidence" value="ECO:0007669"/>
    <property type="project" value="UniProtKB-KW"/>
</dbReference>
<dbReference type="GO" id="GO:0009229">
    <property type="term" value="P:thiamine diphosphate biosynthetic process"/>
    <property type="evidence" value="ECO:0007669"/>
    <property type="project" value="UniProtKB-UniRule"/>
</dbReference>
<dbReference type="FunFam" id="3.20.20.540:FF:000001">
    <property type="entry name" value="Phosphomethylpyrimidine synthase"/>
    <property type="match status" value="1"/>
</dbReference>
<dbReference type="Gene3D" id="6.10.250.620">
    <property type="match status" value="1"/>
</dbReference>
<dbReference type="Gene3D" id="3.20.20.540">
    <property type="entry name" value="Radical SAM ThiC family, central domain"/>
    <property type="match status" value="1"/>
</dbReference>
<dbReference type="HAMAP" id="MF_00089">
    <property type="entry name" value="ThiC"/>
    <property type="match status" value="1"/>
</dbReference>
<dbReference type="InterPro" id="IPR037509">
    <property type="entry name" value="ThiC"/>
</dbReference>
<dbReference type="InterPro" id="IPR038521">
    <property type="entry name" value="ThiC/Bza_core_dom"/>
</dbReference>
<dbReference type="InterPro" id="IPR002817">
    <property type="entry name" value="ThiC/BzaA/B"/>
</dbReference>
<dbReference type="NCBIfam" id="NF009895">
    <property type="entry name" value="PRK13352.1"/>
    <property type="match status" value="1"/>
</dbReference>
<dbReference type="NCBIfam" id="TIGR00190">
    <property type="entry name" value="thiC"/>
    <property type="match status" value="1"/>
</dbReference>
<dbReference type="PANTHER" id="PTHR30557:SF1">
    <property type="entry name" value="PHOSPHOMETHYLPYRIMIDINE SYNTHASE, CHLOROPLASTIC"/>
    <property type="match status" value="1"/>
</dbReference>
<dbReference type="PANTHER" id="PTHR30557">
    <property type="entry name" value="THIAMINE BIOSYNTHESIS PROTEIN THIC"/>
    <property type="match status" value="1"/>
</dbReference>
<dbReference type="Pfam" id="PF01964">
    <property type="entry name" value="ThiC_Rad_SAM"/>
    <property type="match status" value="1"/>
</dbReference>
<dbReference type="SFLD" id="SFLDF00407">
    <property type="entry name" value="phosphomethylpyrimidine_syntha"/>
    <property type="match status" value="1"/>
</dbReference>
<dbReference type="SFLD" id="SFLDG01114">
    <property type="entry name" value="phosphomethylpyrimidine_syntha"/>
    <property type="match status" value="1"/>
</dbReference>
<dbReference type="SFLD" id="SFLDS00113">
    <property type="entry name" value="Radical_SAM_Phosphomethylpyrim"/>
    <property type="match status" value="1"/>
</dbReference>
<keyword id="KW-0004">4Fe-4S</keyword>
<keyword id="KW-0408">Iron</keyword>
<keyword id="KW-0411">Iron-sulfur</keyword>
<keyword id="KW-0456">Lyase</keyword>
<keyword id="KW-0479">Metal-binding</keyword>
<keyword id="KW-1185">Reference proteome</keyword>
<keyword id="KW-0949">S-adenosyl-L-methionine</keyword>
<keyword id="KW-0784">Thiamine biosynthesis</keyword>
<keyword id="KW-0862">Zinc</keyword>
<accession>Q5SKG5</accession>
<evidence type="ECO:0000255" key="1">
    <source>
        <dbReference type="HAMAP-Rule" id="MF_00089"/>
    </source>
</evidence>
<reference key="1">
    <citation type="submission" date="2004-11" db="EMBL/GenBank/DDBJ databases">
        <title>Complete genome sequence of Thermus thermophilus HB8.</title>
        <authorList>
            <person name="Masui R."/>
            <person name="Kurokawa K."/>
            <person name="Nakagawa N."/>
            <person name="Tokunaga F."/>
            <person name="Koyama Y."/>
            <person name="Shibata T."/>
            <person name="Oshima T."/>
            <person name="Yokoyama S."/>
            <person name="Yasunaga T."/>
            <person name="Kuramitsu S."/>
        </authorList>
    </citation>
    <scope>NUCLEOTIDE SEQUENCE [LARGE SCALE GENOMIC DNA]</scope>
    <source>
        <strain>ATCC 27634 / DSM 579 / HB8</strain>
    </source>
</reference>
<proteinExistence type="inferred from homology"/>
<name>THIC_THET8</name>
<protein>
    <recommendedName>
        <fullName evidence="1">Phosphomethylpyrimidine synthase</fullName>
        <ecNumber evidence="1">4.1.99.17</ecNumber>
    </recommendedName>
    <alternativeName>
        <fullName evidence="1">Hydroxymethylpyrimidine phosphate synthase</fullName>
        <shortName evidence="1">HMP-P synthase</shortName>
        <shortName evidence="1">HMP-phosphate synthase</shortName>
        <shortName evidence="1">HMPP synthase</shortName>
    </alternativeName>
    <alternativeName>
        <fullName evidence="1">Thiamine biosynthesis protein ThiC</fullName>
    </alternativeName>
</protein>
<feature type="chain" id="PRO_0000242313" description="Phosphomethylpyrimidine synthase">
    <location>
        <begin position="1"/>
        <end position="435"/>
    </location>
</feature>
<feature type="binding site" evidence="1">
    <location>
        <position position="67"/>
    </location>
    <ligand>
        <name>substrate</name>
    </ligand>
</feature>
<feature type="binding site" evidence="1">
    <location>
        <position position="96"/>
    </location>
    <ligand>
        <name>substrate</name>
    </ligand>
</feature>
<feature type="binding site" evidence="1">
    <location>
        <position position="125"/>
    </location>
    <ligand>
        <name>substrate</name>
    </ligand>
</feature>
<feature type="binding site" evidence="1">
    <location>
        <position position="163"/>
    </location>
    <ligand>
        <name>substrate</name>
    </ligand>
</feature>
<feature type="binding site" evidence="1">
    <location>
        <begin position="185"/>
        <end position="187"/>
    </location>
    <ligand>
        <name>substrate</name>
    </ligand>
</feature>
<feature type="binding site" evidence="1">
    <location>
        <begin position="226"/>
        <end position="229"/>
    </location>
    <ligand>
        <name>substrate</name>
    </ligand>
</feature>
<feature type="binding site" evidence="1">
    <location>
        <position position="265"/>
    </location>
    <ligand>
        <name>substrate</name>
    </ligand>
</feature>
<feature type="binding site" evidence="1">
    <location>
        <position position="269"/>
    </location>
    <ligand>
        <name>Zn(2+)</name>
        <dbReference type="ChEBI" id="CHEBI:29105"/>
    </ligand>
</feature>
<feature type="binding site" evidence="1">
    <location>
        <position position="292"/>
    </location>
    <ligand>
        <name>substrate</name>
    </ligand>
</feature>
<feature type="binding site" evidence="1">
    <location>
        <position position="333"/>
    </location>
    <ligand>
        <name>Zn(2+)</name>
        <dbReference type="ChEBI" id="CHEBI:29105"/>
    </ligand>
</feature>
<feature type="binding site" evidence="1">
    <location>
        <position position="408"/>
    </location>
    <ligand>
        <name>[4Fe-4S] cluster</name>
        <dbReference type="ChEBI" id="CHEBI:49883"/>
        <note>4Fe-4S-S-AdoMet</note>
    </ligand>
</feature>
<feature type="binding site" evidence="1">
    <location>
        <position position="411"/>
    </location>
    <ligand>
        <name>[4Fe-4S] cluster</name>
        <dbReference type="ChEBI" id="CHEBI:49883"/>
        <note>4Fe-4S-S-AdoMet</note>
    </ligand>
</feature>
<feature type="binding site" evidence="1">
    <location>
        <position position="415"/>
    </location>
    <ligand>
        <name>[4Fe-4S] cluster</name>
        <dbReference type="ChEBI" id="CHEBI:49883"/>
        <note>4Fe-4S-S-AdoMet</note>
    </ligand>
</feature>
<organism>
    <name type="scientific">Thermus thermophilus (strain ATCC 27634 / DSM 579 / HB8)</name>
    <dbReference type="NCBI Taxonomy" id="300852"/>
    <lineage>
        <taxon>Bacteria</taxon>
        <taxon>Thermotogati</taxon>
        <taxon>Deinococcota</taxon>
        <taxon>Deinococci</taxon>
        <taxon>Thermales</taxon>
        <taxon>Thermaceae</taxon>
        <taxon>Thermus</taxon>
    </lineage>
</organism>
<gene>
    <name evidence="1" type="primary">thiC</name>
    <name type="ordered locus">TTHA0678</name>
</gene>